<reference key="1">
    <citation type="journal article" date="2002" name="Nature">
        <title>Comparison of the genomes of two Xanthomonas pathogens with differing host specificities.</title>
        <authorList>
            <person name="da Silva A.C.R."/>
            <person name="Ferro J.A."/>
            <person name="Reinach F.C."/>
            <person name="Farah C.S."/>
            <person name="Furlan L.R."/>
            <person name="Quaggio R.B."/>
            <person name="Monteiro-Vitorello C.B."/>
            <person name="Van Sluys M.A."/>
            <person name="Almeida N.F. Jr."/>
            <person name="Alves L.M.C."/>
            <person name="do Amaral A.M."/>
            <person name="Bertolini M.C."/>
            <person name="Camargo L.E.A."/>
            <person name="Camarotte G."/>
            <person name="Cannavan F."/>
            <person name="Cardozo J."/>
            <person name="Chambergo F."/>
            <person name="Ciapina L.P."/>
            <person name="Cicarelli R.M.B."/>
            <person name="Coutinho L.L."/>
            <person name="Cursino-Santos J.R."/>
            <person name="El-Dorry H."/>
            <person name="Faria J.B."/>
            <person name="Ferreira A.J.S."/>
            <person name="Ferreira R.C.C."/>
            <person name="Ferro M.I.T."/>
            <person name="Formighieri E.F."/>
            <person name="Franco M.C."/>
            <person name="Greggio C.C."/>
            <person name="Gruber A."/>
            <person name="Katsuyama A.M."/>
            <person name="Kishi L.T."/>
            <person name="Leite R.P."/>
            <person name="Lemos E.G.M."/>
            <person name="Lemos M.V.F."/>
            <person name="Locali E.C."/>
            <person name="Machado M.A."/>
            <person name="Madeira A.M.B.N."/>
            <person name="Martinez-Rossi N.M."/>
            <person name="Martins E.C."/>
            <person name="Meidanis J."/>
            <person name="Menck C.F.M."/>
            <person name="Miyaki C.Y."/>
            <person name="Moon D.H."/>
            <person name="Moreira L.M."/>
            <person name="Novo M.T.M."/>
            <person name="Okura V.K."/>
            <person name="Oliveira M.C."/>
            <person name="Oliveira V.R."/>
            <person name="Pereira H.A."/>
            <person name="Rossi A."/>
            <person name="Sena J.A.D."/>
            <person name="Silva C."/>
            <person name="de Souza R.F."/>
            <person name="Spinola L.A.F."/>
            <person name="Takita M.A."/>
            <person name="Tamura R.E."/>
            <person name="Teixeira E.C."/>
            <person name="Tezza R.I.D."/>
            <person name="Trindade dos Santos M."/>
            <person name="Truffi D."/>
            <person name="Tsai S.M."/>
            <person name="White F.F."/>
            <person name="Setubal J.C."/>
            <person name="Kitajima J.P."/>
        </authorList>
    </citation>
    <scope>NUCLEOTIDE SEQUENCE [LARGE SCALE GENOMIC DNA]</scope>
    <source>
        <strain>ATCC 33913 / DSM 3586 / NCPPB 528 / LMG 568 / P 25</strain>
    </source>
</reference>
<accession>Q8P3L1</accession>
<feature type="chain" id="PRO_0000208397" description="Acetyl-coenzyme A synthetase">
    <location>
        <begin position="1"/>
        <end position="647"/>
    </location>
</feature>
<feature type="binding site" evidence="1">
    <location>
        <begin position="190"/>
        <end position="193"/>
    </location>
    <ligand>
        <name>CoA</name>
        <dbReference type="ChEBI" id="CHEBI:57287"/>
    </ligand>
</feature>
<feature type="binding site" evidence="1">
    <location>
        <position position="310"/>
    </location>
    <ligand>
        <name>CoA</name>
        <dbReference type="ChEBI" id="CHEBI:57287"/>
    </ligand>
</feature>
<feature type="binding site" evidence="1">
    <location>
        <position position="334"/>
    </location>
    <ligand>
        <name>CoA</name>
        <dbReference type="ChEBI" id="CHEBI:57287"/>
    </ligand>
</feature>
<feature type="binding site" evidence="1">
    <location>
        <begin position="386"/>
        <end position="388"/>
    </location>
    <ligand>
        <name>ATP</name>
        <dbReference type="ChEBI" id="CHEBI:30616"/>
    </ligand>
</feature>
<feature type="binding site" evidence="1">
    <location>
        <begin position="410"/>
        <end position="415"/>
    </location>
    <ligand>
        <name>ATP</name>
        <dbReference type="ChEBI" id="CHEBI:30616"/>
    </ligand>
</feature>
<feature type="binding site" evidence="1">
    <location>
        <position position="499"/>
    </location>
    <ligand>
        <name>ATP</name>
        <dbReference type="ChEBI" id="CHEBI:30616"/>
    </ligand>
</feature>
<feature type="binding site" evidence="1">
    <location>
        <position position="514"/>
    </location>
    <ligand>
        <name>ATP</name>
        <dbReference type="ChEBI" id="CHEBI:30616"/>
    </ligand>
</feature>
<feature type="binding site" evidence="1">
    <location>
        <position position="522"/>
    </location>
    <ligand>
        <name>CoA</name>
        <dbReference type="ChEBI" id="CHEBI:57287"/>
    </ligand>
</feature>
<feature type="binding site" evidence="1">
    <location>
        <position position="525"/>
    </location>
    <ligand>
        <name>ATP</name>
        <dbReference type="ChEBI" id="CHEBI:30616"/>
    </ligand>
</feature>
<feature type="binding site" evidence="1">
    <location>
        <position position="536"/>
    </location>
    <ligand>
        <name>Mg(2+)</name>
        <dbReference type="ChEBI" id="CHEBI:18420"/>
    </ligand>
</feature>
<feature type="binding site" evidence="1">
    <location>
        <position position="538"/>
    </location>
    <ligand>
        <name>Mg(2+)</name>
        <dbReference type="ChEBI" id="CHEBI:18420"/>
    </ligand>
</feature>
<feature type="binding site" evidence="1">
    <location>
        <position position="541"/>
    </location>
    <ligand>
        <name>Mg(2+)</name>
        <dbReference type="ChEBI" id="CHEBI:18420"/>
    </ligand>
</feature>
<feature type="binding site" evidence="1">
    <location>
        <position position="583"/>
    </location>
    <ligand>
        <name>CoA</name>
        <dbReference type="ChEBI" id="CHEBI:57287"/>
    </ligand>
</feature>
<feature type="modified residue" description="N6-acetyllysine" evidence="1">
    <location>
        <position position="608"/>
    </location>
</feature>
<dbReference type="EC" id="6.2.1.1" evidence="1"/>
<dbReference type="EMBL" id="AE008922">
    <property type="protein sequence ID" value="AAM43281.1"/>
    <property type="molecule type" value="Genomic_DNA"/>
</dbReference>
<dbReference type="RefSeq" id="NP_639399.1">
    <property type="nucleotide sequence ID" value="NC_003902.1"/>
</dbReference>
<dbReference type="RefSeq" id="WP_011039129.1">
    <property type="nucleotide sequence ID" value="NC_003902.1"/>
</dbReference>
<dbReference type="SMR" id="Q8P3L1"/>
<dbReference type="STRING" id="190485.XCC4060"/>
<dbReference type="EnsemblBacteria" id="AAM43281">
    <property type="protein sequence ID" value="AAM43281"/>
    <property type="gene ID" value="XCC4060"/>
</dbReference>
<dbReference type="KEGG" id="xcc:XCC4060"/>
<dbReference type="PATRIC" id="fig|190485.4.peg.4350"/>
<dbReference type="eggNOG" id="COG0365">
    <property type="taxonomic scope" value="Bacteria"/>
</dbReference>
<dbReference type="HOGENOM" id="CLU_000022_3_6_6"/>
<dbReference type="OrthoDB" id="9803968at2"/>
<dbReference type="Proteomes" id="UP000001010">
    <property type="component" value="Chromosome"/>
</dbReference>
<dbReference type="GO" id="GO:0005829">
    <property type="term" value="C:cytosol"/>
    <property type="evidence" value="ECO:0000318"/>
    <property type="project" value="GO_Central"/>
</dbReference>
<dbReference type="GO" id="GO:0003987">
    <property type="term" value="F:acetate-CoA ligase activity"/>
    <property type="evidence" value="ECO:0000318"/>
    <property type="project" value="GO_Central"/>
</dbReference>
<dbReference type="GO" id="GO:0016208">
    <property type="term" value="F:AMP binding"/>
    <property type="evidence" value="ECO:0007669"/>
    <property type="project" value="InterPro"/>
</dbReference>
<dbReference type="GO" id="GO:0005524">
    <property type="term" value="F:ATP binding"/>
    <property type="evidence" value="ECO:0007669"/>
    <property type="project" value="UniProtKB-KW"/>
</dbReference>
<dbReference type="GO" id="GO:0046872">
    <property type="term" value="F:metal ion binding"/>
    <property type="evidence" value="ECO:0007669"/>
    <property type="project" value="UniProtKB-KW"/>
</dbReference>
<dbReference type="GO" id="GO:0006085">
    <property type="term" value="P:acetyl-CoA biosynthetic process"/>
    <property type="evidence" value="ECO:0000318"/>
    <property type="project" value="GO_Central"/>
</dbReference>
<dbReference type="GO" id="GO:0019427">
    <property type="term" value="P:acetyl-CoA biosynthetic process from acetate"/>
    <property type="evidence" value="ECO:0007669"/>
    <property type="project" value="InterPro"/>
</dbReference>
<dbReference type="CDD" id="cd05966">
    <property type="entry name" value="ACS"/>
    <property type="match status" value="1"/>
</dbReference>
<dbReference type="FunFam" id="3.30.300.30:FF:000004">
    <property type="entry name" value="Acetyl-coenzyme A synthetase"/>
    <property type="match status" value="1"/>
</dbReference>
<dbReference type="FunFam" id="3.40.50.12780:FF:000001">
    <property type="entry name" value="Acetyl-coenzyme A synthetase"/>
    <property type="match status" value="1"/>
</dbReference>
<dbReference type="Gene3D" id="3.30.300.30">
    <property type="match status" value="1"/>
</dbReference>
<dbReference type="Gene3D" id="3.40.50.12780">
    <property type="entry name" value="N-terminal domain of ligase-like"/>
    <property type="match status" value="1"/>
</dbReference>
<dbReference type="HAMAP" id="MF_01123">
    <property type="entry name" value="Ac_CoA_synth"/>
    <property type="match status" value="1"/>
</dbReference>
<dbReference type="InterPro" id="IPR011904">
    <property type="entry name" value="Ac_CoA_lig"/>
</dbReference>
<dbReference type="InterPro" id="IPR032387">
    <property type="entry name" value="ACAS_N"/>
</dbReference>
<dbReference type="InterPro" id="IPR025110">
    <property type="entry name" value="AMP-bd_C"/>
</dbReference>
<dbReference type="InterPro" id="IPR045851">
    <property type="entry name" value="AMP-bd_C_sf"/>
</dbReference>
<dbReference type="InterPro" id="IPR020845">
    <property type="entry name" value="AMP-binding_CS"/>
</dbReference>
<dbReference type="InterPro" id="IPR000873">
    <property type="entry name" value="AMP-dep_synth/lig_dom"/>
</dbReference>
<dbReference type="InterPro" id="IPR042099">
    <property type="entry name" value="ANL_N_sf"/>
</dbReference>
<dbReference type="NCBIfam" id="TIGR02188">
    <property type="entry name" value="Ac_CoA_lig_AcsA"/>
    <property type="match status" value="1"/>
</dbReference>
<dbReference type="NCBIfam" id="NF001208">
    <property type="entry name" value="PRK00174.1"/>
    <property type="match status" value="1"/>
</dbReference>
<dbReference type="PANTHER" id="PTHR24095">
    <property type="entry name" value="ACETYL-COENZYME A SYNTHETASE"/>
    <property type="match status" value="1"/>
</dbReference>
<dbReference type="PANTHER" id="PTHR24095:SF14">
    <property type="entry name" value="ACETYL-COENZYME A SYNTHETASE 1"/>
    <property type="match status" value="1"/>
</dbReference>
<dbReference type="Pfam" id="PF16177">
    <property type="entry name" value="ACAS_N"/>
    <property type="match status" value="1"/>
</dbReference>
<dbReference type="Pfam" id="PF00501">
    <property type="entry name" value="AMP-binding"/>
    <property type="match status" value="1"/>
</dbReference>
<dbReference type="Pfam" id="PF13193">
    <property type="entry name" value="AMP-binding_C"/>
    <property type="match status" value="1"/>
</dbReference>
<dbReference type="SUPFAM" id="SSF56801">
    <property type="entry name" value="Acetyl-CoA synthetase-like"/>
    <property type="match status" value="1"/>
</dbReference>
<dbReference type="PROSITE" id="PS00455">
    <property type="entry name" value="AMP_BINDING"/>
    <property type="match status" value="1"/>
</dbReference>
<comment type="function">
    <text evidence="1">Catalyzes the conversion of acetate into acetyl-CoA (AcCoA), an essential intermediate at the junction of anabolic and catabolic pathways. AcsA undergoes a two-step reaction. In the first half reaction, AcsA combines acetate with ATP to form acetyl-adenylate (AcAMP) intermediate. In the second half reaction, it can then transfer the acetyl group from AcAMP to the sulfhydryl group of CoA, forming the product AcCoA.</text>
</comment>
<comment type="catalytic activity">
    <reaction evidence="1">
        <text>acetate + ATP + CoA = acetyl-CoA + AMP + diphosphate</text>
        <dbReference type="Rhea" id="RHEA:23176"/>
        <dbReference type="ChEBI" id="CHEBI:30089"/>
        <dbReference type="ChEBI" id="CHEBI:30616"/>
        <dbReference type="ChEBI" id="CHEBI:33019"/>
        <dbReference type="ChEBI" id="CHEBI:57287"/>
        <dbReference type="ChEBI" id="CHEBI:57288"/>
        <dbReference type="ChEBI" id="CHEBI:456215"/>
        <dbReference type="EC" id="6.2.1.1"/>
    </reaction>
</comment>
<comment type="cofactor">
    <cofactor evidence="1">
        <name>Mg(2+)</name>
        <dbReference type="ChEBI" id="CHEBI:18420"/>
    </cofactor>
</comment>
<comment type="PTM">
    <text evidence="1">Acetylated. Deacetylation by the SIR2-homolog deacetylase activates the enzyme.</text>
</comment>
<comment type="similarity">
    <text evidence="1">Belongs to the ATP-dependent AMP-binding enzyme family.</text>
</comment>
<protein>
    <recommendedName>
        <fullName evidence="1">Acetyl-coenzyme A synthetase</fullName>
        <shortName evidence="1">AcCoA synthetase</shortName>
        <shortName evidence="1">Acs</shortName>
        <ecNumber evidence="1">6.2.1.1</ecNumber>
    </recommendedName>
    <alternativeName>
        <fullName evidence="1">Acetate--CoA ligase</fullName>
    </alternativeName>
    <alternativeName>
        <fullName evidence="1">Acyl-activating enzyme</fullName>
    </alternativeName>
</protein>
<keyword id="KW-0007">Acetylation</keyword>
<keyword id="KW-0067">ATP-binding</keyword>
<keyword id="KW-0436">Ligase</keyword>
<keyword id="KW-0460">Magnesium</keyword>
<keyword id="KW-0479">Metal-binding</keyword>
<keyword id="KW-0547">Nucleotide-binding</keyword>
<keyword id="KW-1185">Reference proteome</keyword>
<gene>
    <name evidence="1" type="primary">acsA</name>
    <name type="synonym">acs</name>
    <name type="ordered locus">XCC4060</name>
</gene>
<organism>
    <name type="scientific">Xanthomonas campestris pv. campestris (strain ATCC 33913 / DSM 3586 / NCPPB 528 / LMG 568 / P 25)</name>
    <dbReference type="NCBI Taxonomy" id="190485"/>
    <lineage>
        <taxon>Bacteria</taxon>
        <taxon>Pseudomonadati</taxon>
        <taxon>Pseudomonadota</taxon>
        <taxon>Gammaproteobacteria</taxon>
        <taxon>Lysobacterales</taxon>
        <taxon>Lysobacteraceae</taxon>
        <taxon>Xanthomonas</taxon>
    </lineage>
</organism>
<name>ACSA_XANCP</name>
<sequence length="647" mass="71410">MADVYPVDPAFAADARITREQYATLYRESIEHPEQFWGKAAQRLDWFKQPTQIKDVSFALDDFHVRWFGDGELNASVNCLDRQLATRGDKTALLFEPDSPDSPSYPVTYRELYERVCKLGNALRNLGVKKGDRVTIYLPMIVDAAVAMLACARIGAVHSVVFGGFAANSIADRVIDCQSKLIITADEGLRGGKKIPLKANVDAALKIPGTNTVETVLVVRHTGGAVDMQAPRDRWFHDVVDGQPAECEPERMNAEDPLFILYTSGSTGKPKGVLHTTAGYLLFASYTHEVVFDLREDDIYWCTADVGWVTGHSYIVYGPLANGATAVMFEGVPNYPNVSRFWEVIDKHQVTIFYTAPTAIRALMREGEAPVKKTSRSSLRLLGSVGEPINPEAWRWYYEVVGDSRCPIVDTWWQTETGGILISPLAGAVDLKPGSATLPFFGVQPALVDAEGKILEGATEGNLVLLDSWPGQMRTVYGDHQRFIDTYFRTYPGSYFTGDGCRRDADGYYWITGRVDDVINVSGHRIGTAEVESALVSHPKVAEAAVVGFPHDVKGQGIYAYVTLIAGETPSEELHKELVSWVRKEIGPIASPDHLQWAPGLPKTRSGKIMRRILRKIAENAPDQLGDTSTLADPSVVDSLVNERLTR</sequence>
<evidence type="ECO:0000255" key="1">
    <source>
        <dbReference type="HAMAP-Rule" id="MF_01123"/>
    </source>
</evidence>
<proteinExistence type="inferred from homology"/>